<proteinExistence type="inferred from homology"/>
<organism>
    <name type="scientific">Tomato bushy stunt virus (strain Ja6)</name>
    <name type="common">TBSV</name>
    <dbReference type="NCBI Taxonomy" id="70157"/>
    <lineage>
        <taxon>Viruses</taxon>
        <taxon>Riboviria</taxon>
        <taxon>Orthornavirae</taxon>
        <taxon>Kitrinoviricota</taxon>
        <taxon>Tolucaviricetes</taxon>
        <taxon>Tolivirales</taxon>
        <taxon>Tombusviridae</taxon>
        <taxon>Procedovirinae</taxon>
        <taxon>Tombusvirus</taxon>
        <taxon>Tombusvirus lycopersici</taxon>
    </lineage>
</organism>
<evidence type="ECO:0000250" key="1"/>
<evidence type="ECO:0000256" key="2">
    <source>
        <dbReference type="SAM" id="MobiDB-lite"/>
    </source>
</evidence>
<evidence type="ECO:0000305" key="3"/>
<accession>P69516</accession>
<accession>P50627</accession>
<reference key="1">
    <citation type="journal article" date="1996" name="Phytopathology">
        <title>Different tomato bushy stunt virus strains cause disease outbreaks on solanaceous crops in Spain.</title>
        <authorList>
            <person name="Luis-Areteaga M."/>
            <person name="Rodriguez-Cerezo E."/>
            <person name="Fraile A."/>
            <person name="Saez E."/>
            <person name="Garcia-Arenal F."/>
        </authorList>
        <dbReference type="AGRICOLA" id="IND20581771"/>
    </citation>
    <scope>NUCLEOTIDE SEQUENCE [GENOMIC RNA]</scope>
</reference>
<name>P19_TBSVJ</name>
<organismHost>
    <name type="scientific">Capsicum annuum</name>
    <name type="common">Capsicum pepper</name>
    <dbReference type="NCBI Taxonomy" id="4072"/>
</organismHost>
<organismHost>
    <name type="scientific">Malus</name>
    <dbReference type="NCBI Taxonomy" id="3749"/>
</organismHost>
<organismHost>
    <name type="scientific">Pyrus</name>
    <name type="common">pears</name>
    <dbReference type="NCBI Taxonomy" id="3766"/>
</organismHost>
<organismHost>
    <name type="scientific">Solanum lycopersicum</name>
    <name type="common">Tomato</name>
    <name type="synonym">Lycopersicon esculentum</name>
    <dbReference type="NCBI Taxonomy" id="4081"/>
</organismHost>
<organismHost>
    <name type="scientific">Solanum melongena</name>
    <name type="common">eggplant</name>
    <dbReference type="NCBI Taxonomy" id="4111"/>
</organismHost>
<organismHost>
    <name type="scientific">Tolmiea menziesii</name>
    <dbReference type="NCBI Taxonomy" id="29777"/>
</organismHost>
<organismHost>
    <name type="scientific">Tulipa</name>
    <dbReference type="NCBI Taxonomy" id="13305"/>
</organismHost>
<dbReference type="EMBL" id="Z68901">
    <property type="protein sequence ID" value="CAA93136.1"/>
    <property type="molecule type" value="Genomic_RNA"/>
</dbReference>
<dbReference type="SMR" id="P69516"/>
<dbReference type="GO" id="GO:0044423">
    <property type="term" value="C:virion component"/>
    <property type="evidence" value="ECO:0007669"/>
    <property type="project" value="InterPro"/>
</dbReference>
<dbReference type="GO" id="GO:0003723">
    <property type="term" value="F:RNA binding"/>
    <property type="evidence" value="ECO:0007669"/>
    <property type="project" value="UniProtKB-KW"/>
</dbReference>
<dbReference type="GO" id="GO:0052170">
    <property type="term" value="P:symbiont-mediated suppression of host innate immune response"/>
    <property type="evidence" value="ECO:0007669"/>
    <property type="project" value="UniProtKB-KW"/>
</dbReference>
<dbReference type="Gene3D" id="3.30.390.180">
    <property type="entry name" value="RNA silencing suppressor P19"/>
    <property type="match status" value="1"/>
</dbReference>
<dbReference type="InterPro" id="IPR004905">
    <property type="entry name" value="Tombusvirus_p19"/>
</dbReference>
<dbReference type="InterPro" id="IPR036131">
    <property type="entry name" value="VP19_sf"/>
</dbReference>
<dbReference type="Pfam" id="PF03220">
    <property type="entry name" value="Tombus_P19"/>
    <property type="match status" value="1"/>
</dbReference>
<dbReference type="SUPFAM" id="SSF103145">
    <property type="entry name" value="Tombusvirus P19 core protein, VP19"/>
    <property type="match status" value="1"/>
</dbReference>
<protein>
    <recommendedName>
        <fullName>RNA silencing suppressor p19</fullName>
    </recommendedName>
    <alternativeName>
        <fullName>19 kDa symptom severity modulator</fullName>
    </alternativeName>
</protein>
<feature type="chain" id="PRO_0000222882" description="RNA silencing suppressor p19">
    <location>
        <begin position="1"/>
        <end position="172"/>
    </location>
</feature>
<feature type="region of interest" description="Disordered" evidence="2">
    <location>
        <begin position="1"/>
        <end position="37"/>
    </location>
</feature>
<feature type="compositionally biased region" description="Basic and acidic residues" evidence="2">
    <location>
        <begin position="1"/>
        <end position="20"/>
    </location>
</feature>
<keyword id="KW-0945">Host-virus interaction</keyword>
<keyword id="KW-1090">Inhibition of host innate immune response by virus</keyword>
<keyword id="KW-0694">RNA-binding</keyword>
<keyword id="KW-0941">Suppressor of RNA silencing</keyword>
<keyword id="KW-0899">Viral immunoevasion</keyword>
<gene>
    <name type="ORF">ORF4</name>
</gene>
<sequence length="172" mass="19364">MERAIQGNDAREQANSERWDGGSGGTTSPFKLPDESPSWTEWRLHNDETNSNQDNPLGFKESWGFGKVVFKRYLRYDRTEASLHRVLGSWTGDSVNYAASRFFGFDQIGCTYSIRFRGVSITVSGGSRTLQHLCEMAIRSKQELLQLAPIEVESNVSRGCPEGTQTFEKEGE</sequence>
<comment type="function">
    <text evidence="1">Viral suppressor of RNA silencing which binds specifically to silencing RNAs (siRNAs). Acts as a molecular caliper to specifically select siRNAs based on the length of the duplex region of the RNA (By similarity).</text>
</comment>
<comment type="subunit">
    <text evidence="1">Homodimer.</text>
</comment>
<comment type="similarity">
    <text evidence="3">Belongs to the tombusvirus protein p19 family.</text>
</comment>